<dbReference type="EMBL" id="AAFI02000073">
    <property type="protein sequence ID" value="EAL64914.1"/>
    <property type="molecule type" value="Genomic_DNA"/>
</dbReference>
<dbReference type="RefSeq" id="XP_639919.1">
    <property type="nucleotide sequence ID" value="XM_634827.1"/>
</dbReference>
<dbReference type="SMR" id="Q54NZ8"/>
<dbReference type="FunCoup" id="Q54NZ8">
    <property type="interactions" value="130"/>
</dbReference>
<dbReference type="STRING" id="44689.Q54NZ8"/>
<dbReference type="PaxDb" id="44689-DDB0186246"/>
<dbReference type="EnsemblProtists" id="EAL64914">
    <property type="protein sequence ID" value="EAL64914"/>
    <property type="gene ID" value="DDB_G0284901"/>
</dbReference>
<dbReference type="GeneID" id="8624831"/>
<dbReference type="KEGG" id="ddi:DDB_G0284901"/>
<dbReference type="dictyBase" id="DDB_G0284901"/>
<dbReference type="VEuPathDB" id="AmoebaDB:DDB_G0284901"/>
<dbReference type="eggNOG" id="KOG4044">
    <property type="taxonomic scope" value="Eukaryota"/>
</dbReference>
<dbReference type="HOGENOM" id="CLU_066901_0_1_1"/>
<dbReference type="InParanoid" id="Q54NZ8"/>
<dbReference type="OMA" id="HVCVFQT"/>
<dbReference type="PhylomeDB" id="Q54NZ8"/>
<dbReference type="PRO" id="PR:Q54NZ8"/>
<dbReference type="Proteomes" id="UP000002195">
    <property type="component" value="Chromosome 4"/>
</dbReference>
<dbReference type="CDD" id="cd01012">
    <property type="entry name" value="YcaC_related"/>
    <property type="match status" value="1"/>
</dbReference>
<dbReference type="Gene3D" id="3.40.50.850">
    <property type="entry name" value="Isochorismatase-like"/>
    <property type="match status" value="1"/>
</dbReference>
<dbReference type="InterPro" id="IPR000868">
    <property type="entry name" value="Isochorismatase-like_dom"/>
</dbReference>
<dbReference type="InterPro" id="IPR036380">
    <property type="entry name" value="Isochorismatase-like_sf"/>
</dbReference>
<dbReference type="InterPro" id="IPR050993">
    <property type="entry name" value="Isochorismatase_domain"/>
</dbReference>
<dbReference type="PANTHER" id="PTHR14119">
    <property type="entry name" value="HYDROLASE"/>
    <property type="match status" value="1"/>
</dbReference>
<dbReference type="PANTHER" id="PTHR14119:SF3">
    <property type="entry name" value="ISOCHORISMATASE DOMAIN-CONTAINING PROTEIN 2"/>
    <property type="match status" value="1"/>
</dbReference>
<dbReference type="Pfam" id="PF00857">
    <property type="entry name" value="Isochorismatase"/>
    <property type="match status" value="1"/>
</dbReference>
<dbReference type="SUPFAM" id="SSF52499">
    <property type="entry name" value="Isochorismatase-like hydrolases"/>
    <property type="match status" value="1"/>
</dbReference>
<feature type="chain" id="PRO_0000331276" description="Isochorismatase family protein 1B">
    <location>
        <begin position="1"/>
        <end position="206"/>
    </location>
</feature>
<sequence length="206" mass="23568">MIRSLGKIVPETSALFICDIQSKFANHIFKFNGVVNQSKYMMRVCNELKVPIIFTEQYPKGLGHTFEDLLKERNENNQTKIFEKTLYSMCTNEVLNHLKQNHKDLKSILITGIETHVCVLQSTLDFLENGYDVHILSDAVSSNNNNDRLIALERMRQSGAFITTTESIIFQLTRDATHKSFKSIVPITKQRRDDLVADPSLSLSKM</sequence>
<evidence type="ECO:0000305" key="1"/>
<accession>Q54NZ8</accession>
<proteinExistence type="inferred from homology"/>
<gene>
    <name type="ORF">DDB_G0284901</name>
</gene>
<organism>
    <name type="scientific">Dictyostelium discoideum</name>
    <name type="common">Social amoeba</name>
    <dbReference type="NCBI Taxonomy" id="44689"/>
    <lineage>
        <taxon>Eukaryota</taxon>
        <taxon>Amoebozoa</taxon>
        <taxon>Evosea</taxon>
        <taxon>Eumycetozoa</taxon>
        <taxon>Dictyostelia</taxon>
        <taxon>Dictyosteliales</taxon>
        <taxon>Dictyosteliaceae</taxon>
        <taxon>Dictyostelium</taxon>
    </lineage>
</organism>
<reference key="1">
    <citation type="journal article" date="2005" name="Nature">
        <title>The genome of the social amoeba Dictyostelium discoideum.</title>
        <authorList>
            <person name="Eichinger L."/>
            <person name="Pachebat J.A."/>
            <person name="Gloeckner G."/>
            <person name="Rajandream M.A."/>
            <person name="Sucgang R."/>
            <person name="Berriman M."/>
            <person name="Song J."/>
            <person name="Olsen R."/>
            <person name="Szafranski K."/>
            <person name="Xu Q."/>
            <person name="Tunggal B."/>
            <person name="Kummerfeld S."/>
            <person name="Madera M."/>
            <person name="Konfortov B.A."/>
            <person name="Rivero F."/>
            <person name="Bankier A.T."/>
            <person name="Lehmann R."/>
            <person name="Hamlin N."/>
            <person name="Davies R."/>
            <person name="Gaudet P."/>
            <person name="Fey P."/>
            <person name="Pilcher K."/>
            <person name="Chen G."/>
            <person name="Saunders D."/>
            <person name="Sodergren E.J."/>
            <person name="Davis P."/>
            <person name="Kerhornou A."/>
            <person name="Nie X."/>
            <person name="Hall N."/>
            <person name="Anjard C."/>
            <person name="Hemphill L."/>
            <person name="Bason N."/>
            <person name="Farbrother P."/>
            <person name="Desany B."/>
            <person name="Just E."/>
            <person name="Morio T."/>
            <person name="Rost R."/>
            <person name="Churcher C.M."/>
            <person name="Cooper J."/>
            <person name="Haydock S."/>
            <person name="van Driessche N."/>
            <person name="Cronin A."/>
            <person name="Goodhead I."/>
            <person name="Muzny D.M."/>
            <person name="Mourier T."/>
            <person name="Pain A."/>
            <person name="Lu M."/>
            <person name="Harper D."/>
            <person name="Lindsay R."/>
            <person name="Hauser H."/>
            <person name="James K.D."/>
            <person name="Quiles M."/>
            <person name="Madan Babu M."/>
            <person name="Saito T."/>
            <person name="Buchrieser C."/>
            <person name="Wardroper A."/>
            <person name="Felder M."/>
            <person name="Thangavelu M."/>
            <person name="Johnson D."/>
            <person name="Knights A."/>
            <person name="Loulseged H."/>
            <person name="Mungall K.L."/>
            <person name="Oliver K."/>
            <person name="Price C."/>
            <person name="Quail M.A."/>
            <person name="Urushihara H."/>
            <person name="Hernandez J."/>
            <person name="Rabbinowitsch E."/>
            <person name="Steffen D."/>
            <person name="Sanders M."/>
            <person name="Ma J."/>
            <person name="Kohara Y."/>
            <person name="Sharp S."/>
            <person name="Simmonds M.N."/>
            <person name="Spiegler S."/>
            <person name="Tivey A."/>
            <person name="Sugano S."/>
            <person name="White B."/>
            <person name="Walker D."/>
            <person name="Woodward J.R."/>
            <person name="Winckler T."/>
            <person name="Tanaka Y."/>
            <person name="Shaulsky G."/>
            <person name="Schleicher M."/>
            <person name="Weinstock G.M."/>
            <person name="Rosenthal A."/>
            <person name="Cox E.C."/>
            <person name="Chisholm R.L."/>
            <person name="Gibbs R.A."/>
            <person name="Loomis W.F."/>
            <person name="Platzer M."/>
            <person name="Kay R.R."/>
            <person name="Williams J.G."/>
            <person name="Dear P.H."/>
            <person name="Noegel A.A."/>
            <person name="Barrell B.G."/>
            <person name="Kuspa A."/>
        </authorList>
    </citation>
    <scope>NUCLEOTIDE SEQUENCE [LARGE SCALE GENOMIC DNA]</scope>
    <source>
        <strain>AX4</strain>
    </source>
</reference>
<protein>
    <recommendedName>
        <fullName>Isochorismatase family protein 1B</fullName>
    </recommendedName>
</protein>
<keyword id="KW-1185">Reference proteome</keyword>
<comment type="similarity">
    <text evidence="1">Belongs to the isochorismatase family.</text>
</comment>
<name>ISC1B_DICDI</name>